<reference key="1">
    <citation type="journal article" date="1997" name="Gene">
        <title>Sequencing and analysis of the Thermus thermophilus ribosomal protein gene cluster equivalent to the spectinomycin operon.</title>
        <authorList>
            <person name="Vysotskaya V.S."/>
            <person name="Shcherbakov D.V."/>
            <person name="Garber M.B."/>
        </authorList>
    </citation>
    <scope>NUCLEOTIDE SEQUENCE [GENOMIC DNA]</scope>
    <source>
        <strain>VK1</strain>
    </source>
</reference>
<reference key="2">
    <citation type="submission" date="1999-09" db="EMBL/GenBank/DDBJ databases">
        <authorList>
            <person name="Shcherbakov D.V."/>
        </authorList>
    </citation>
    <scope>SEQUENCE REVISION TO 58-65</scope>
    <source>
        <strain>VK1</strain>
    </source>
</reference>
<reference key="3">
    <citation type="journal article" date="2001" name="Mol. Biol. (Mosk.)">
        <title>The Thermus thermophilus 5S rRNA-protein complex: identification of specific binding sites for proteins L5 and L18 in 5S rRNA.</title>
        <authorList>
            <person name="Gongadze G.M."/>
            <person name="Perederina A.A."/>
            <person name="Meshcheriakov V.A."/>
            <person name="Fedorov R.V."/>
            <person name="Moskalenko S.E."/>
            <person name="Rak A.V."/>
            <person name="Serganov A.A."/>
            <person name="Shcherbakov D.V."/>
            <person name="Nikonov S.V."/>
            <person name="Garber M.B."/>
        </authorList>
    </citation>
    <scope>BINDING TO 5S RRNA</scope>
    <source>
        <strain>VK1</strain>
    </source>
</reference>
<reference key="4">
    <citation type="journal article" date="2000" name="J. Biomol. NMR">
        <title>Letter to the editor: assignment and secondary structure identification of the ribosomal protein L18 from Thermus thermophilus.</title>
        <authorList>
            <person name="Woestenenk E.A."/>
            <person name="Allard P."/>
            <person name="Gongadze G.M."/>
            <person name="Moskalenko S.E."/>
            <person name="Shcherbakov D.V."/>
            <person name="Rak A.V."/>
            <person name="Garber M.B."/>
            <person name="Haerd T."/>
            <person name="Berglund H."/>
        </authorList>
    </citation>
    <scope>STRUCTURE BY NMR</scope>
</reference>
<reference key="5">
    <citation type="journal article" date="2002" name="Biochem. J.">
        <title>The solution structure of ribosomal protein L18 from Thermus thermophilus reveals a conserved RNA-binding fold.</title>
        <authorList>
            <person name="Woestenenk E.A."/>
            <person name="Gongadze G.M."/>
            <person name="Shcherbakov D.V."/>
            <person name="Rak A.V."/>
            <person name="Garber M.B."/>
            <person name="Haerd T."/>
            <person name="Berglund H."/>
        </authorList>
    </citation>
    <scope>STRUCTURE BY NMR OF 23-112</scope>
</reference>
<accession>P80320</accession>
<evidence type="ECO:0000250" key="1"/>
<evidence type="ECO:0000269" key="2">
    <source>
    </source>
</evidence>
<evidence type="ECO:0000305" key="3"/>
<evidence type="ECO:0007829" key="4">
    <source>
        <dbReference type="PDB" id="1ILY"/>
    </source>
</evidence>
<keyword id="KW-0002">3D-structure</keyword>
<keyword id="KW-0687">Ribonucleoprotein</keyword>
<keyword id="KW-0689">Ribosomal protein</keyword>
<keyword id="KW-0694">RNA-binding</keyword>
<keyword id="KW-0699">rRNA-binding</keyword>
<gene>
    <name type="primary">rplR</name>
    <name type="synonym">rpl18</name>
</gene>
<comment type="function">
    <text evidence="1">This is one of the proteins that bind and probably mediate the attachment of the 5S RNA into the large ribosomal subunit, where it forms part of the central protuberance.</text>
</comment>
<comment type="subunit">
    <text evidence="2">Part of the 50S ribosomal subunit; part of the 5S rRNA/L5/L18/L25 subcomplex. Contacts the 5S and probably the 23S rRNA; has been isolated as a complex with the 5S rRNA and L5 (PubMed:11524947).</text>
</comment>
<comment type="similarity">
    <text evidence="3">Belongs to the universal ribosomal protein uL18 family.</text>
</comment>
<organism>
    <name type="scientific">Thermus thermophilus</name>
    <dbReference type="NCBI Taxonomy" id="274"/>
    <lineage>
        <taxon>Bacteria</taxon>
        <taxon>Thermotogati</taxon>
        <taxon>Deinococcota</taxon>
        <taxon>Deinococci</taxon>
        <taxon>Thermales</taxon>
        <taxon>Thermaceae</taxon>
        <taxon>Thermus</taxon>
    </lineage>
</organism>
<sequence>MARLTAYERRKFRVRNRIKRTGRLRLSVFRSLKHIYAQIIDDEKGVTLVSASSLALKLKGNKTEVARQVGRALAEKALALGIKQVAFDRGPYKYHGRVKALAEGAREGGLEF</sequence>
<name>RL18_THETH</name>
<feature type="initiator methionine" description="Removed" evidence="1">
    <location>
        <position position="1"/>
    </location>
</feature>
<feature type="chain" id="PRO_0000131373" description="Large ribosomal subunit protein uL18">
    <location>
        <begin position="2"/>
        <end position="112"/>
    </location>
</feature>
<feature type="strand" evidence="4">
    <location>
        <begin position="25"/>
        <end position="30"/>
    </location>
</feature>
<feature type="strand" evidence="4">
    <location>
        <begin position="35"/>
        <end position="41"/>
    </location>
</feature>
<feature type="turn" evidence="4">
    <location>
        <begin position="42"/>
        <end position="45"/>
    </location>
</feature>
<feature type="strand" evidence="4">
    <location>
        <begin position="46"/>
        <end position="52"/>
    </location>
</feature>
<feature type="helix" evidence="4">
    <location>
        <begin position="53"/>
        <end position="56"/>
    </location>
</feature>
<feature type="helix" evidence="4">
    <location>
        <begin position="66"/>
        <end position="79"/>
    </location>
</feature>
<feature type="helix" evidence="4">
    <location>
        <begin position="96"/>
        <end position="108"/>
    </location>
</feature>
<dbReference type="EMBL" id="X90765">
    <property type="protein sequence ID" value="CAA62289.2"/>
    <property type="molecule type" value="Genomic_DNA"/>
</dbReference>
<dbReference type="RefSeq" id="WP_008633391.1">
    <property type="nucleotide sequence ID" value="NZ_VHHQ01000024.1"/>
</dbReference>
<dbReference type="PDB" id="1ILY">
    <property type="method" value="NMR"/>
    <property type="chains" value="A=23-112"/>
</dbReference>
<dbReference type="PDBsum" id="1ILY"/>
<dbReference type="BMRB" id="P80320"/>
<dbReference type="SMR" id="P80320"/>
<dbReference type="GeneID" id="3169978"/>
<dbReference type="OMA" id="NKQIYAQ"/>
<dbReference type="EvolutionaryTrace" id="P80320"/>
<dbReference type="GO" id="GO:0022625">
    <property type="term" value="C:cytosolic large ribosomal subunit"/>
    <property type="evidence" value="ECO:0007669"/>
    <property type="project" value="TreeGrafter"/>
</dbReference>
<dbReference type="GO" id="GO:0008097">
    <property type="term" value="F:5S rRNA binding"/>
    <property type="evidence" value="ECO:0007669"/>
    <property type="project" value="TreeGrafter"/>
</dbReference>
<dbReference type="GO" id="GO:0003735">
    <property type="term" value="F:structural constituent of ribosome"/>
    <property type="evidence" value="ECO:0007669"/>
    <property type="project" value="InterPro"/>
</dbReference>
<dbReference type="GO" id="GO:0006412">
    <property type="term" value="P:translation"/>
    <property type="evidence" value="ECO:0007669"/>
    <property type="project" value="UniProtKB-UniRule"/>
</dbReference>
<dbReference type="CDD" id="cd00432">
    <property type="entry name" value="Ribosomal_L18_L5e"/>
    <property type="match status" value="1"/>
</dbReference>
<dbReference type="FunFam" id="3.30.420.100:FF:000001">
    <property type="entry name" value="50S ribosomal protein L18"/>
    <property type="match status" value="1"/>
</dbReference>
<dbReference type="Gene3D" id="3.30.420.100">
    <property type="match status" value="1"/>
</dbReference>
<dbReference type="HAMAP" id="MF_01337_B">
    <property type="entry name" value="Ribosomal_uL18_B"/>
    <property type="match status" value="1"/>
</dbReference>
<dbReference type="InterPro" id="IPR004389">
    <property type="entry name" value="Ribosomal_uL18_bac-type"/>
</dbReference>
<dbReference type="InterPro" id="IPR005484">
    <property type="entry name" value="Ribosomal_uL18_bac/euk"/>
</dbReference>
<dbReference type="NCBIfam" id="TIGR00060">
    <property type="entry name" value="L18_bact"/>
    <property type="match status" value="1"/>
</dbReference>
<dbReference type="PANTHER" id="PTHR12899">
    <property type="entry name" value="39S RIBOSOMAL PROTEIN L18, MITOCHONDRIAL"/>
    <property type="match status" value="1"/>
</dbReference>
<dbReference type="PANTHER" id="PTHR12899:SF3">
    <property type="entry name" value="LARGE RIBOSOMAL SUBUNIT PROTEIN UL18M"/>
    <property type="match status" value="1"/>
</dbReference>
<dbReference type="Pfam" id="PF00861">
    <property type="entry name" value="Ribosomal_L18p"/>
    <property type="match status" value="1"/>
</dbReference>
<dbReference type="SUPFAM" id="SSF53137">
    <property type="entry name" value="Translational machinery components"/>
    <property type="match status" value="1"/>
</dbReference>
<protein>
    <recommendedName>
        <fullName evidence="3">Large ribosomal subunit protein uL18</fullName>
    </recommendedName>
    <alternativeName>
        <fullName>50S ribosomal protein L18</fullName>
    </alternativeName>
    <alternativeName>
        <fullName>TL24</fullName>
    </alternativeName>
</protein>
<proteinExistence type="evidence at protein level"/>